<organism>
    <name type="scientific">Pinus thunbergii</name>
    <name type="common">Japanese black pine</name>
    <name type="synonym">Pinus thunbergiana</name>
    <dbReference type="NCBI Taxonomy" id="3350"/>
    <lineage>
        <taxon>Eukaryota</taxon>
        <taxon>Viridiplantae</taxon>
        <taxon>Streptophyta</taxon>
        <taxon>Embryophyta</taxon>
        <taxon>Tracheophyta</taxon>
        <taxon>Spermatophyta</taxon>
        <taxon>Pinopsida</taxon>
        <taxon>Pinidae</taxon>
        <taxon>Conifers I</taxon>
        <taxon>Pinales</taxon>
        <taxon>Pinaceae</taxon>
        <taxon>Pinus</taxon>
        <taxon>Pinus subgen. Pinus</taxon>
    </lineage>
</organism>
<accession>P41606</accession>
<sequence>MKIWRFFLMKERTRLPFDNLPFYNKVMDKTAIKKLISRLIDHFGMTYTSHILDQLKTSGFQQATDTAISLGIDDLLTAPSKGWLVQDAEQQGSVSEKQNHYGNVHAVEKLRQSIEIWYATSEYLRKEMNPNFSMTDPLNPVHVMSFSGARGSTSQVHQLVGMRGLMSDPQGQIIDLPIRRNLREGLSLTEYIISCYGARKGVVDTAVRTADAGYLTRRLVEVVQHIVVRRTDCGTIQGIFVSPIRGRERDRNEIVVRTQILIGRVLADDVYINRRCIATRNQDIGVGLANQLINLRTQPIYIRTPFTCKSISRICQLCYGRSTTHSHLIELGEAVGIIAGQSIGEPGTQLTLRTFHTGGVFTGDIAEHIRAPFNGKIEFNENLVYPTRTRNGHPAYLCHNNLSITIDGQDQVQNLTIPPQSLLLVQNDQYVESEQLIAEVRARTSSFKEKVRKNIYSDLEGEMHWSTNVCHAPEYVQGNVHPILRTGYLWILSGGIYGSRVVPFPFHKYQDQVYVQPFVAKHQSLSDSYVDQVEHRSGDSNCYEKEEQIFSYSETETDRTISNKHRDSIYVFYPNNYNIKGKKQMNRFIVSLQCDKEWEKKIIPCPDAILRIPKSGILQRNSIFGYSNVEHGIPDGSNMTTPFSLDLSREGDNLQIQISYSISYEDGERIQVMSDISIPLVRTCIGFDWEQIDSIESEAYVSLISVRTNKIVNNMVQISLMKYPPFFMGRRDNKTSPNLMFHNNLDHTNLLSSNGASQLISKHQGIICSLSNGEEDSGSFMVLSPSDYFRIVLFNDSKCYDTGNQSNRKDPMRKIIEFSGLLGNLHSITNRFPSSHFLTYKKVLSKKHSIFHNSFNTFQVPKYYFMDENMIIYHFDPCRNIISNLLGPNWCSSSSESEFCEKTFPVVSLGQLIPESVWISEDEPLPESGQIIAVDEESLVIRSAKPYLATRKATVHSHYGKILDKGDTLITLIYERFKSSDIIQGLPKVEQLSEARLNNSISMNLKESFENWTGDMTRFLGSLWGLFISARITMEQSQIHLVNQIQKVYRSQGVRIGDKHIEVIVRQMTSKVLISEDGTANVFSPGELIVLSRAQRMDRALEEAIYYQTMLLGITRASLNTQSFISEASFQETARVLAKAALQGRIDWLKGLKENVILGGMIPAGTGQHIHRSGKRNGIDPRIGNRNLFSNKVKDILFHHDKVDFFSFQDNSYKYHNILKQQLK</sequence>
<feature type="chain" id="PRO_0000067942" description="DNA-directed RNA polymerase subunit beta''">
    <location>
        <begin position="1"/>
        <end position="1224"/>
    </location>
</feature>
<feature type="binding site" evidence="1">
    <location>
        <position position="233"/>
    </location>
    <ligand>
        <name>Zn(2+)</name>
        <dbReference type="ChEBI" id="CHEBI:29105"/>
    </ligand>
</feature>
<feature type="binding site" evidence="1">
    <location>
        <position position="308"/>
    </location>
    <ligand>
        <name>Zn(2+)</name>
        <dbReference type="ChEBI" id="CHEBI:29105"/>
    </ligand>
</feature>
<feature type="binding site" evidence="1">
    <location>
        <position position="315"/>
    </location>
    <ligand>
        <name>Zn(2+)</name>
        <dbReference type="ChEBI" id="CHEBI:29105"/>
    </ligand>
</feature>
<feature type="binding site" evidence="1">
    <location>
        <position position="318"/>
    </location>
    <ligand>
        <name>Zn(2+)</name>
        <dbReference type="ChEBI" id="CHEBI:29105"/>
    </ligand>
</feature>
<reference key="1">
    <citation type="journal article" date="1994" name="Proc. Natl. Acad. Sci. U.S.A.">
        <title>Loss of all ndh genes as determined by sequencing the entire chloroplast genome of the black pine Pinus thunbergii.</title>
        <authorList>
            <person name="Wakasugi T."/>
            <person name="Tsudzuki J."/>
            <person name="Ito S."/>
            <person name="Nakashima K."/>
            <person name="Tsudzuki T."/>
            <person name="Sugiura M."/>
        </authorList>
    </citation>
    <scope>NUCLEOTIDE SEQUENCE [LARGE SCALE GENOMIC DNA]</scope>
</reference>
<name>RPOC2_PINTH</name>
<proteinExistence type="inferred from homology"/>
<keyword id="KW-0150">Chloroplast</keyword>
<keyword id="KW-0240">DNA-directed RNA polymerase</keyword>
<keyword id="KW-0479">Metal-binding</keyword>
<keyword id="KW-0548">Nucleotidyltransferase</keyword>
<keyword id="KW-0934">Plastid</keyword>
<keyword id="KW-0804">Transcription</keyword>
<keyword id="KW-0808">Transferase</keyword>
<keyword id="KW-0862">Zinc</keyword>
<evidence type="ECO:0000255" key="1">
    <source>
        <dbReference type="HAMAP-Rule" id="MF_01324"/>
    </source>
</evidence>
<gene>
    <name evidence="1" type="primary">rpoC2</name>
</gene>
<geneLocation type="chloroplast"/>
<comment type="function">
    <text evidence="1">DNA-dependent RNA polymerase catalyzes the transcription of DNA into RNA using the four ribonucleoside triphosphates as substrates.</text>
</comment>
<comment type="catalytic activity">
    <reaction evidence="1">
        <text>RNA(n) + a ribonucleoside 5'-triphosphate = RNA(n+1) + diphosphate</text>
        <dbReference type="Rhea" id="RHEA:21248"/>
        <dbReference type="Rhea" id="RHEA-COMP:14527"/>
        <dbReference type="Rhea" id="RHEA-COMP:17342"/>
        <dbReference type="ChEBI" id="CHEBI:33019"/>
        <dbReference type="ChEBI" id="CHEBI:61557"/>
        <dbReference type="ChEBI" id="CHEBI:140395"/>
        <dbReference type="EC" id="2.7.7.6"/>
    </reaction>
</comment>
<comment type="cofactor">
    <cofactor evidence="1">
        <name>Zn(2+)</name>
        <dbReference type="ChEBI" id="CHEBI:29105"/>
    </cofactor>
    <text evidence="1">Binds 1 Zn(2+) ion per subunit.</text>
</comment>
<comment type="subunit">
    <text evidence="1">In plastids the minimal PEP RNA polymerase catalytic core is composed of four subunits: alpha, beta, beta', and beta''. When a (nuclear-encoded) sigma factor is associated with the core the holoenzyme is formed, which can initiate transcription.</text>
</comment>
<comment type="subcellular location">
    <subcellularLocation>
        <location evidence="1">Plastid</location>
        <location evidence="1">Chloroplast</location>
    </subcellularLocation>
</comment>
<comment type="similarity">
    <text evidence="1">Belongs to the RNA polymerase beta' chain family. RpoC2 subfamily.</text>
</comment>
<dbReference type="EC" id="2.7.7.6" evidence="1"/>
<dbReference type="EMBL" id="D17510">
    <property type="protein sequence ID" value="BAA04325.1"/>
    <property type="molecule type" value="Genomic_DNA"/>
</dbReference>
<dbReference type="PIR" id="T07446">
    <property type="entry name" value="T07446"/>
</dbReference>
<dbReference type="RefSeq" id="NP_042367.1">
    <property type="nucleotide sequence ID" value="NC_001631.1"/>
</dbReference>
<dbReference type="SMR" id="P41606"/>
<dbReference type="GeneID" id="809025"/>
<dbReference type="GO" id="GO:0009507">
    <property type="term" value="C:chloroplast"/>
    <property type="evidence" value="ECO:0007669"/>
    <property type="project" value="UniProtKB-SubCell"/>
</dbReference>
<dbReference type="GO" id="GO:0000428">
    <property type="term" value="C:DNA-directed RNA polymerase complex"/>
    <property type="evidence" value="ECO:0007669"/>
    <property type="project" value="UniProtKB-KW"/>
</dbReference>
<dbReference type="GO" id="GO:0005739">
    <property type="term" value="C:mitochondrion"/>
    <property type="evidence" value="ECO:0007669"/>
    <property type="project" value="GOC"/>
</dbReference>
<dbReference type="GO" id="GO:0003677">
    <property type="term" value="F:DNA binding"/>
    <property type="evidence" value="ECO:0007669"/>
    <property type="project" value="UniProtKB-UniRule"/>
</dbReference>
<dbReference type="GO" id="GO:0003899">
    <property type="term" value="F:DNA-directed RNA polymerase activity"/>
    <property type="evidence" value="ECO:0007669"/>
    <property type="project" value="UniProtKB-UniRule"/>
</dbReference>
<dbReference type="GO" id="GO:0008270">
    <property type="term" value="F:zinc ion binding"/>
    <property type="evidence" value="ECO:0007669"/>
    <property type="project" value="UniProtKB-UniRule"/>
</dbReference>
<dbReference type="GO" id="GO:0006351">
    <property type="term" value="P:DNA-templated transcription"/>
    <property type="evidence" value="ECO:0007669"/>
    <property type="project" value="UniProtKB-UniRule"/>
</dbReference>
<dbReference type="CDD" id="cd02655">
    <property type="entry name" value="RNAP_beta'_C"/>
    <property type="match status" value="1"/>
</dbReference>
<dbReference type="Gene3D" id="1.10.132.30">
    <property type="match status" value="1"/>
</dbReference>
<dbReference type="Gene3D" id="1.10.150.390">
    <property type="match status" value="1"/>
</dbReference>
<dbReference type="Gene3D" id="1.10.1790.20">
    <property type="match status" value="1"/>
</dbReference>
<dbReference type="Gene3D" id="1.10.274.100">
    <property type="entry name" value="RNA polymerase Rpb1, domain 3"/>
    <property type="match status" value="1"/>
</dbReference>
<dbReference type="HAMAP" id="MF_01324">
    <property type="entry name" value="RNApol_bact_RpoC2"/>
    <property type="match status" value="1"/>
</dbReference>
<dbReference type="InterPro" id="IPR012756">
    <property type="entry name" value="DNA-dir_RpoC2_beta_pp"/>
</dbReference>
<dbReference type="InterPro" id="IPR050254">
    <property type="entry name" value="RNA_pol_beta''_euk"/>
</dbReference>
<dbReference type="InterPro" id="IPR042102">
    <property type="entry name" value="RNA_pol_Rpb1_3_sf"/>
</dbReference>
<dbReference type="InterPro" id="IPR007083">
    <property type="entry name" value="RNA_pol_Rpb1_4"/>
</dbReference>
<dbReference type="InterPro" id="IPR007081">
    <property type="entry name" value="RNA_pol_Rpb1_5"/>
</dbReference>
<dbReference type="InterPro" id="IPR038120">
    <property type="entry name" value="Rpb1_funnel_sf"/>
</dbReference>
<dbReference type="NCBIfam" id="TIGR02388">
    <property type="entry name" value="rpoC2_cyan"/>
    <property type="match status" value="1"/>
</dbReference>
<dbReference type="PANTHER" id="PTHR34995">
    <property type="entry name" value="DNA-DIRECTED RNA POLYMERASE SUBUNIT BETA"/>
    <property type="match status" value="1"/>
</dbReference>
<dbReference type="PANTHER" id="PTHR34995:SF1">
    <property type="entry name" value="DNA-DIRECTED RNA POLYMERASE SUBUNIT BETA"/>
    <property type="match status" value="1"/>
</dbReference>
<dbReference type="Pfam" id="PF05000">
    <property type="entry name" value="RNA_pol_Rpb1_4"/>
    <property type="match status" value="1"/>
</dbReference>
<dbReference type="Pfam" id="PF04998">
    <property type="entry name" value="RNA_pol_Rpb1_5"/>
    <property type="match status" value="2"/>
</dbReference>
<dbReference type="SUPFAM" id="SSF64484">
    <property type="entry name" value="beta and beta-prime subunits of DNA dependent RNA-polymerase"/>
    <property type="match status" value="1"/>
</dbReference>
<protein>
    <recommendedName>
        <fullName evidence="1">DNA-directed RNA polymerase subunit beta''</fullName>
        <ecNumber evidence="1">2.7.7.6</ecNumber>
    </recommendedName>
    <alternativeName>
        <fullName evidence="1">PEP</fullName>
    </alternativeName>
    <alternativeName>
        <fullName evidence="1">Plastid-encoded RNA polymerase subunit beta''</fullName>
        <shortName evidence="1">RNA polymerase subunit beta''</shortName>
    </alternativeName>
</protein>